<proteinExistence type="inferred from homology"/>
<evidence type="ECO:0000255" key="1">
    <source>
        <dbReference type="HAMAP-Rule" id="MF_00218"/>
    </source>
</evidence>
<keyword id="KW-0963">Cytoplasm</keyword>
<keyword id="KW-0210">Decarboxylase</keyword>
<keyword id="KW-0456">Lyase</keyword>
<keyword id="KW-0627">Porphyrin biosynthesis</keyword>
<protein>
    <recommendedName>
        <fullName evidence="1">Uroporphyrinogen decarboxylase</fullName>
        <shortName evidence="1">UPD</shortName>
        <shortName evidence="1">URO-D</shortName>
        <ecNumber evidence="1">4.1.1.37</ecNumber>
    </recommendedName>
</protein>
<comment type="function">
    <text evidence="1">Catalyzes the decarboxylation of four acetate groups of uroporphyrinogen-III to yield coproporphyrinogen-III.</text>
</comment>
<comment type="catalytic activity">
    <reaction evidence="1">
        <text>uroporphyrinogen III + 4 H(+) = coproporphyrinogen III + 4 CO2</text>
        <dbReference type="Rhea" id="RHEA:19865"/>
        <dbReference type="ChEBI" id="CHEBI:15378"/>
        <dbReference type="ChEBI" id="CHEBI:16526"/>
        <dbReference type="ChEBI" id="CHEBI:57308"/>
        <dbReference type="ChEBI" id="CHEBI:57309"/>
        <dbReference type="EC" id="4.1.1.37"/>
    </reaction>
</comment>
<comment type="pathway">
    <text evidence="1">Porphyrin-containing compound metabolism; protoporphyrin-IX biosynthesis; coproporphyrinogen-III from 5-aminolevulinate: step 4/4.</text>
</comment>
<comment type="subunit">
    <text evidence="1">Homodimer.</text>
</comment>
<comment type="subcellular location">
    <subcellularLocation>
        <location evidence="1">Cytoplasm</location>
    </subcellularLocation>
</comment>
<comment type="similarity">
    <text evidence="1">Belongs to the uroporphyrinogen decarboxylase family.</text>
</comment>
<accession>B5BJR6</accession>
<organism>
    <name type="scientific">Salmonella paratyphi A (strain AKU_12601)</name>
    <dbReference type="NCBI Taxonomy" id="554290"/>
    <lineage>
        <taxon>Bacteria</taxon>
        <taxon>Pseudomonadati</taxon>
        <taxon>Pseudomonadota</taxon>
        <taxon>Gammaproteobacteria</taxon>
        <taxon>Enterobacterales</taxon>
        <taxon>Enterobacteriaceae</taxon>
        <taxon>Salmonella</taxon>
    </lineage>
</organism>
<name>DCUP_SALPK</name>
<gene>
    <name evidence="1" type="primary">hemE</name>
    <name type="ordered locus">SSPA3719</name>
</gene>
<feature type="chain" id="PRO_1000100017" description="Uroporphyrinogen decarboxylase">
    <location>
        <begin position="1"/>
        <end position="354"/>
    </location>
</feature>
<feature type="binding site" evidence="1">
    <location>
        <begin position="27"/>
        <end position="31"/>
    </location>
    <ligand>
        <name>substrate</name>
    </ligand>
</feature>
<feature type="binding site" evidence="1">
    <location>
        <position position="77"/>
    </location>
    <ligand>
        <name>substrate</name>
    </ligand>
</feature>
<feature type="binding site" evidence="1">
    <location>
        <position position="154"/>
    </location>
    <ligand>
        <name>substrate</name>
    </ligand>
</feature>
<feature type="binding site" evidence="1">
    <location>
        <position position="209"/>
    </location>
    <ligand>
        <name>substrate</name>
    </ligand>
</feature>
<feature type="binding site" evidence="1">
    <location>
        <position position="327"/>
    </location>
    <ligand>
        <name>substrate</name>
    </ligand>
</feature>
<feature type="site" description="Transition state stabilizer" evidence="1">
    <location>
        <position position="77"/>
    </location>
</feature>
<dbReference type="EC" id="4.1.1.37" evidence="1"/>
<dbReference type="EMBL" id="FM200053">
    <property type="protein sequence ID" value="CAR62002.1"/>
    <property type="molecule type" value="Genomic_DNA"/>
</dbReference>
<dbReference type="RefSeq" id="WP_000137620.1">
    <property type="nucleotide sequence ID" value="NC_011147.1"/>
</dbReference>
<dbReference type="SMR" id="B5BJR6"/>
<dbReference type="KEGG" id="sek:SSPA3719"/>
<dbReference type="HOGENOM" id="CLU_040933_0_0_6"/>
<dbReference type="UniPathway" id="UPA00251">
    <property type="reaction ID" value="UER00321"/>
</dbReference>
<dbReference type="Proteomes" id="UP000001869">
    <property type="component" value="Chromosome"/>
</dbReference>
<dbReference type="GO" id="GO:0005829">
    <property type="term" value="C:cytosol"/>
    <property type="evidence" value="ECO:0007669"/>
    <property type="project" value="TreeGrafter"/>
</dbReference>
<dbReference type="GO" id="GO:0004853">
    <property type="term" value="F:uroporphyrinogen decarboxylase activity"/>
    <property type="evidence" value="ECO:0007669"/>
    <property type="project" value="UniProtKB-UniRule"/>
</dbReference>
<dbReference type="GO" id="GO:0019353">
    <property type="term" value="P:protoporphyrinogen IX biosynthetic process from glutamate"/>
    <property type="evidence" value="ECO:0007669"/>
    <property type="project" value="TreeGrafter"/>
</dbReference>
<dbReference type="CDD" id="cd00717">
    <property type="entry name" value="URO-D"/>
    <property type="match status" value="1"/>
</dbReference>
<dbReference type="FunFam" id="3.20.20.210:FF:000001">
    <property type="entry name" value="Uroporphyrinogen decarboxylase"/>
    <property type="match status" value="1"/>
</dbReference>
<dbReference type="Gene3D" id="3.20.20.210">
    <property type="match status" value="1"/>
</dbReference>
<dbReference type="HAMAP" id="MF_00218">
    <property type="entry name" value="URO_D"/>
    <property type="match status" value="1"/>
</dbReference>
<dbReference type="InterPro" id="IPR038071">
    <property type="entry name" value="UROD/MetE-like_sf"/>
</dbReference>
<dbReference type="InterPro" id="IPR006361">
    <property type="entry name" value="Uroporphyrinogen_deCO2ase_HemE"/>
</dbReference>
<dbReference type="InterPro" id="IPR000257">
    <property type="entry name" value="Uroporphyrinogen_deCOase"/>
</dbReference>
<dbReference type="NCBIfam" id="TIGR01464">
    <property type="entry name" value="hemE"/>
    <property type="match status" value="1"/>
</dbReference>
<dbReference type="PANTHER" id="PTHR21091">
    <property type="entry name" value="METHYLTETRAHYDROFOLATE:HOMOCYSTEINE METHYLTRANSFERASE RELATED"/>
    <property type="match status" value="1"/>
</dbReference>
<dbReference type="PANTHER" id="PTHR21091:SF169">
    <property type="entry name" value="UROPORPHYRINOGEN DECARBOXYLASE"/>
    <property type="match status" value="1"/>
</dbReference>
<dbReference type="Pfam" id="PF01208">
    <property type="entry name" value="URO-D"/>
    <property type="match status" value="1"/>
</dbReference>
<dbReference type="SUPFAM" id="SSF51726">
    <property type="entry name" value="UROD/MetE-like"/>
    <property type="match status" value="1"/>
</dbReference>
<dbReference type="PROSITE" id="PS00906">
    <property type="entry name" value="UROD_1"/>
    <property type="match status" value="1"/>
</dbReference>
<dbReference type="PROSITE" id="PS00907">
    <property type="entry name" value="UROD_2"/>
    <property type="match status" value="1"/>
</dbReference>
<reference key="1">
    <citation type="journal article" date="2009" name="BMC Genomics">
        <title>Pseudogene accumulation in the evolutionary histories of Salmonella enterica serovars Paratyphi A and Typhi.</title>
        <authorList>
            <person name="Holt K.E."/>
            <person name="Thomson N.R."/>
            <person name="Wain J."/>
            <person name="Langridge G.C."/>
            <person name="Hasan R."/>
            <person name="Bhutta Z.A."/>
            <person name="Quail M.A."/>
            <person name="Norbertczak H."/>
            <person name="Walker D."/>
            <person name="Simmonds M."/>
            <person name="White B."/>
            <person name="Bason N."/>
            <person name="Mungall K."/>
            <person name="Dougan G."/>
            <person name="Parkhill J."/>
        </authorList>
    </citation>
    <scope>NUCLEOTIDE SEQUENCE [LARGE SCALE GENOMIC DNA]</scope>
    <source>
        <strain>AKU_12601</strain>
    </source>
</reference>
<sequence>MTELKNDRYLRALLRQPVDVTPVWMMRQAGRYLPEYKATRAQAGDFMSLCKNAELACEVTLQPLRRYPLDAAILFSDILTIPDAMGLGLYFEAGEGPRFTAPVTCKADVDKLPIPDPEDELGYVMNAVRTIRRELKGEVPLIGFSGSPWTLATYMVEGGSSKAFTVIKKMMYADPQALHLLLDKLAKSVTLYLNAQIKAGAQSVMIFDTWGGVLTGRDYQQFSLYYMHKIVDGLLRENDGRRVPVTLFTKGGGQWLEAMAETGCDALGLDWTTDIADARRRVGHKVALQGNMDPSMLYAPPARIEDEVATILAGFGQGEGHVFNLGHGIHQDVPPEHAGAFVEAVHRLSAQYHS</sequence>